<keyword id="KW-0274">FAD</keyword>
<keyword id="KW-0285">Flavoprotein</keyword>
<keyword id="KW-0489">Methyltransferase</keyword>
<keyword id="KW-0521">NADP</keyword>
<keyword id="KW-0545">Nucleotide biosynthesis</keyword>
<keyword id="KW-1185">Reference proteome</keyword>
<keyword id="KW-0808">Transferase</keyword>
<feature type="chain" id="PRO_0000175577" description="Flavin-dependent thymidylate synthase">
    <location>
        <begin position="1"/>
        <end position="246"/>
    </location>
</feature>
<feature type="domain" description="ThyX" evidence="2">
    <location>
        <begin position="17"/>
        <end position="241"/>
    </location>
</feature>
<feature type="short sequence motif" description="ThyX motif" evidence="1">
    <location>
        <begin position="92"/>
        <end position="103"/>
    </location>
</feature>
<feature type="active site" description="Involved in ionization of N3 of dUMP, leading to its activation" evidence="1">
    <location>
        <position position="200"/>
    </location>
</feature>
<feature type="binding site" evidence="1">
    <location>
        <position position="69"/>
    </location>
    <ligand>
        <name>FAD</name>
        <dbReference type="ChEBI" id="CHEBI:57692"/>
        <note>ligand shared between neighboring subunits</note>
    </ligand>
</feature>
<feature type="binding site" evidence="1">
    <location>
        <begin position="89"/>
        <end position="92"/>
    </location>
    <ligand>
        <name>dUMP</name>
        <dbReference type="ChEBI" id="CHEBI:246422"/>
        <note>ligand shared between dimeric partners</note>
    </ligand>
</feature>
<feature type="binding site" evidence="1">
    <location>
        <begin position="92"/>
        <end position="94"/>
    </location>
    <ligand>
        <name>FAD</name>
        <dbReference type="ChEBI" id="CHEBI:57692"/>
        <note>ligand shared between neighboring subunits</note>
    </ligand>
</feature>
<feature type="binding site" description="in other chain" evidence="1">
    <location>
        <begin position="101"/>
        <end position="105"/>
    </location>
    <ligand>
        <name>dUMP</name>
        <dbReference type="ChEBI" id="CHEBI:246422"/>
        <note>ligand shared between dimeric partners</note>
    </ligand>
</feature>
<feature type="binding site" evidence="1">
    <location>
        <position position="101"/>
    </location>
    <ligand>
        <name>FAD</name>
        <dbReference type="ChEBI" id="CHEBI:57692"/>
        <note>ligand shared between neighboring subunits</note>
    </ligand>
</feature>
<feature type="binding site" description="in other chain" evidence="1">
    <location>
        <position position="173"/>
    </location>
    <ligand>
        <name>dUMP</name>
        <dbReference type="ChEBI" id="CHEBI:246422"/>
        <note>ligand shared between dimeric partners</note>
    </ligand>
</feature>
<feature type="binding site" evidence="1">
    <location>
        <begin position="189"/>
        <end position="191"/>
    </location>
    <ligand>
        <name>FAD</name>
        <dbReference type="ChEBI" id="CHEBI:57692"/>
        <note>ligand shared between neighboring subunits</note>
    </ligand>
</feature>
<feature type="binding site" evidence="1">
    <location>
        <position position="195"/>
    </location>
    <ligand>
        <name>FAD</name>
        <dbReference type="ChEBI" id="CHEBI:57692"/>
        <note>ligand shared between neighboring subunits</note>
    </ligand>
</feature>
<feature type="binding site" evidence="1">
    <location>
        <position position="200"/>
    </location>
    <ligand>
        <name>dUMP</name>
        <dbReference type="ChEBI" id="CHEBI:246422"/>
        <note>ligand shared between dimeric partners</note>
    </ligand>
</feature>
<proteinExistence type="inferred from homology"/>
<sequence>MTDIPADDPKIELRSDITVELVKSAATDSDVLFAARVSTAGEQSLDELKKDPERSKGLINYLMRDRHGSPFEHNSMTFFVSAPIFVFREFMRHRVGWSYNEESGRYRELQPVFYAPDASRKLVQQGRPGKYVFVEGTPEQHELVGSAMEDSYRQAYATYQQMLAAGVAREVARAVLPVGLYSSMYATCNARSLMHFLGLRTQHELAKVPSFPQREIEMAGEKMEAEWARLMPLTHAAFNANGRVAP</sequence>
<organism>
    <name type="scientific">Streptomyces coelicolor (strain ATCC BAA-471 / A3(2) / M145)</name>
    <dbReference type="NCBI Taxonomy" id="100226"/>
    <lineage>
        <taxon>Bacteria</taxon>
        <taxon>Bacillati</taxon>
        <taxon>Actinomycetota</taxon>
        <taxon>Actinomycetes</taxon>
        <taxon>Kitasatosporales</taxon>
        <taxon>Streptomycetaceae</taxon>
        <taxon>Streptomyces</taxon>
        <taxon>Streptomyces albidoflavus group</taxon>
    </lineage>
</organism>
<dbReference type="EC" id="2.1.1.148" evidence="1"/>
<dbReference type="EMBL" id="AL939124">
    <property type="protein sequence ID" value="CAA20294.1"/>
    <property type="molecule type" value="Genomic_DNA"/>
</dbReference>
<dbReference type="PIR" id="T35843">
    <property type="entry name" value="T35843"/>
</dbReference>
<dbReference type="RefSeq" id="NP_629868.1">
    <property type="nucleotide sequence ID" value="NC_003888.3"/>
</dbReference>
<dbReference type="RefSeq" id="WP_011030430.1">
    <property type="nucleotide sequence ID" value="NZ_VNID01000024.1"/>
</dbReference>
<dbReference type="SMR" id="O86840"/>
<dbReference type="FunCoup" id="O86840">
    <property type="interactions" value="31"/>
</dbReference>
<dbReference type="STRING" id="100226.gene:17763399"/>
<dbReference type="PaxDb" id="100226-SCO5743"/>
<dbReference type="KEGG" id="sco:SCO5743"/>
<dbReference type="PATRIC" id="fig|100226.15.peg.5831"/>
<dbReference type="eggNOG" id="COG1351">
    <property type="taxonomic scope" value="Bacteria"/>
</dbReference>
<dbReference type="HOGENOM" id="CLU_067790_0_0_11"/>
<dbReference type="InParanoid" id="O86840"/>
<dbReference type="OrthoDB" id="9774464at2"/>
<dbReference type="PhylomeDB" id="O86840"/>
<dbReference type="UniPathway" id="UPA00575"/>
<dbReference type="Proteomes" id="UP000001973">
    <property type="component" value="Chromosome"/>
</dbReference>
<dbReference type="GO" id="GO:0050660">
    <property type="term" value="F:flavin adenine dinucleotide binding"/>
    <property type="evidence" value="ECO:0000318"/>
    <property type="project" value="GO_Central"/>
</dbReference>
<dbReference type="GO" id="GO:0070402">
    <property type="term" value="F:NADPH binding"/>
    <property type="evidence" value="ECO:0000318"/>
    <property type="project" value="GO_Central"/>
</dbReference>
<dbReference type="GO" id="GO:0050797">
    <property type="term" value="F:thymidylate synthase (FAD) activity"/>
    <property type="evidence" value="ECO:0000318"/>
    <property type="project" value="GO_Central"/>
</dbReference>
<dbReference type="GO" id="GO:0004799">
    <property type="term" value="F:thymidylate synthase activity"/>
    <property type="evidence" value="ECO:0000318"/>
    <property type="project" value="GO_Central"/>
</dbReference>
<dbReference type="GO" id="GO:0006231">
    <property type="term" value="P:dTMP biosynthetic process"/>
    <property type="evidence" value="ECO:0000318"/>
    <property type="project" value="GO_Central"/>
</dbReference>
<dbReference type="GO" id="GO:0006235">
    <property type="term" value="P:dTTP biosynthetic process"/>
    <property type="evidence" value="ECO:0007669"/>
    <property type="project" value="UniProtKB-UniRule"/>
</dbReference>
<dbReference type="GO" id="GO:0032259">
    <property type="term" value="P:methylation"/>
    <property type="evidence" value="ECO:0007669"/>
    <property type="project" value="UniProtKB-KW"/>
</dbReference>
<dbReference type="CDD" id="cd20175">
    <property type="entry name" value="ThyX"/>
    <property type="match status" value="1"/>
</dbReference>
<dbReference type="FunFam" id="3.30.1360.170:FF:000001">
    <property type="entry name" value="Flavin-dependent thymidylate synthase"/>
    <property type="match status" value="1"/>
</dbReference>
<dbReference type="Gene3D" id="3.30.1360.170">
    <property type="match status" value="1"/>
</dbReference>
<dbReference type="HAMAP" id="MF_01408">
    <property type="entry name" value="ThyX"/>
    <property type="match status" value="1"/>
</dbReference>
<dbReference type="InterPro" id="IPR003669">
    <property type="entry name" value="Thymidylate_synthase_ThyX"/>
</dbReference>
<dbReference type="InterPro" id="IPR036098">
    <property type="entry name" value="Thymidylate_synthase_ThyX_sf"/>
</dbReference>
<dbReference type="NCBIfam" id="TIGR02170">
    <property type="entry name" value="thyX"/>
    <property type="match status" value="1"/>
</dbReference>
<dbReference type="PANTHER" id="PTHR34934">
    <property type="entry name" value="FLAVIN-DEPENDENT THYMIDYLATE SYNTHASE"/>
    <property type="match status" value="1"/>
</dbReference>
<dbReference type="PANTHER" id="PTHR34934:SF1">
    <property type="entry name" value="FLAVIN-DEPENDENT THYMIDYLATE SYNTHASE"/>
    <property type="match status" value="1"/>
</dbReference>
<dbReference type="Pfam" id="PF02511">
    <property type="entry name" value="Thy1"/>
    <property type="match status" value="1"/>
</dbReference>
<dbReference type="SUPFAM" id="SSF69796">
    <property type="entry name" value="Thymidylate synthase-complementing protein Thy1"/>
    <property type="match status" value="1"/>
</dbReference>
<dbReference type="PROSITE" id="PS51331">
    <property type="entry name" value="THYX"/>
    <property type="match status" value="1"/>
</dbReference>
<name>THYX_STRCO</name>
<evidence type="ECO:0000255" key="1">
    <source>
        <dbReference type="HAMAP-Rule" id="MF_01408"/>
    </source>
</evidence>
<evidence type="ECO:0000255" key="2">
    <source>
        <dbReference type="PROSITE-ProRule" id="PRU00661"/>
    </source>
</evidence>
<comment type="function">
    <text evidence="1">Catalyzes the reductive methylation of 2'-deoxyuridine-5'-monophosphate (dUMP) to 2'-deoxythymidine-5'-monophosphate (dTMP) while utilizing 5,10-methylenetetrahydrofolate (mTHF) as the methyl donor, and NADPH and FADH(2) as the reductant.</text>
</comment>
<comment type="catalytic activity">
    <reaction evidence="1">
        <text>dUMP + (6R)-5,10-methylene-5,6,7,8-tetrahydrofolate + NADPH + H(+) = dTMP + (6S)-5,6,7,8-tetrahydrofolate + NADP(+)</text>
        <dbReference type="Rhea" id="RHEA:29043"/>
        <dbReference type="ChEBI" id="CHEBI:15378"/>
        <dbReference type="ChEBI" id="CHEBI:15636"/>
        <dbReference type="ChEBI" id="CHEBI:57453"/>
        <dbReference type="ChEBI" id="CHEBI:57783"/>
        <dbReference type="ChEBI" id="CHEBI:58349"/>
        <dbReference type="ChEBI" id="CHEBI:63528"/>
        <dbReference type="ChEBI" id="CHEBI:246422"/>
        <dbReference type="EC" id="2.1.1.148"/>
    </reaction>
</comment>
<comment type="cofactor">
    <cofactor evidence="1">
        <name>FAD</name>
        <dbReference type="ChEBI" id="CHEBI:57692"/>
    </cofactor>
    <text evidence="1">Binds 4 FAD per tetramer. Each FAD binding site is formed by three monomers.</text>
</comment>
<comment type="pathway">
    <text evidence="1">Pyrimidine metabolism; dTTP biosynthesis.</text>
</comment>
<comment type="subunit">
    <text evidence="1">Homotetramer.</text>
</comment>
<comment type="similarity">
    <text evidence="1">Belongs to the thymidylate synthase ThyX family.</text>
</comment>
<protein>
    <recommendedName>
        <fullName evidence="1">Flavin-dependent thymidylate synthase</fullName>
        <shortName evidence="1">FDTS</shortName>
        <ecNumber evidence="1">2.1.1.148</ecNumber>
    </recommendedName>
    <alternativeName>
        <fullName evidence="1">FAD-dependent thymidylate synthase</fullName>
    </alternativeName>
    <alternativeName>
        <fullName evidence="1">Thymidylate synthase ThyX</fullName>
        <shortName evidence="1">TS</shortName>
        <shortName evidence="1">TSase</shortName>
    </alternativeName>
</protein>
<reference key="1">
    <citation type="journal article" date="2002" name="Nature">
        <title>Complete genome sequence of the model actinomycete Streptomyces coelicolor A3(2).</title>
        <authorList>
            <person name="Bentley S.D."/>
            <person name="Chater K.F."/>
            <person name="Cerdeno-Tarraga A.-M."/>
            <person name="Challis G.L."/>
            <person name="Thomson N.R."/>
            <person name="James K.D."/>
            <person name="Harris D.E."/>
            <person name="Quail M.A."/>
            <person name="Kieser H."/>
            <person name="Harper D."/>
            <person name="Bateman A."/>
            <person name="Brown S."/>
            <person name="Chandra G."/>
            <person name="Chen C.W."/>
            <person name="Collins M."/>
            <person name="Cronin A."/>
            <person name="Fraser A."/>
            <person name="Goble A."/>
            <person name="Hidalgo J."/>
            <person name="Hornsby T."/>
            <person name="Howarth S."/>
            <person name="Huang C.-H."/>
            <person name="Kieser T."/>
            <person name="Larke L."/>
            <person name="Murphy L.D."/>
            <person name="Oliver K."/>
            <person name="O'Neil S."/>
            <person name="Rabbinowitsch E."/>
            <person name="Rajandream M.A."/>
            <person name="Rutherford K.M."/>
            <person name="Rutter S."/>
            <person name="Seeger K."/>
            <person name="Saunders D."/>
            <person name="Sharp S."/>
            <person name="Squares R."/>
            <person name="Squares S."/>
            <person name="Taylor K."/>
            <person name="Warren T."/>
            <person name="Wietzorrek A."/>
            <person name="Woodward J.R."/>
            <person name="Barrell B.G."/>
            <person name="Parkhill J."/>
            <person name="Hopwood D.A."/>
        </authorList>
    </citation>
    <scope>NUCLEOTIDE SEQUENCE [LARGE SCALE GENOMIC DNA]</scope>
    <source>
        <strain>ATCC BAA-471 / A3(2) / M145</strain>
    </source>
</reference>
<gene>
    <name evidence="1" type="primary">thyX</name>
    <name type="ordered locus">SCO5743</name>
    <name type="ORF">SC9A10.07</name>
</gene>
<accession>O86840</accession>